<gene>
    <name evidence="3" type="primary">panP</name>
    <name evidence="5" type="ordered locus">VF_0892</name>
</gene>
<evidence type="ECO:0000250" key="1">
    <source>
        <dbReference type="UniProtKB" id="Q9Y600"/>
    </source>
</evidence>
<evidence type="ECO:0000269" key="2">
    <source>
    </source>
</evidence>
<evidence type="ECO:0000303" key="3">
    <source>
    </source>
</evidence>
<evidence type="ECO:0000305" key="4"/>
<evidence type="ECO:0000312" key="5">
    <source>
        <dbReference type="EMBL" id="AAW85387.1"/>
    </source>
</evidence>
<dbReference type="EC" id="4.1.1.11" evidence="2"/>
<dbReference type="EMBL" id="CP000020">
    <property type="protein sequence ID" value="AAW85387.1"/>
    <property type="molecule type" value="Genomic_DNA"/>
</dbReference>
<dbReference type="RefSeq" id="WP_011261555.1">
    <property type="nucleotide sequence ID" value="NC_006840.2"/>
</dbReference>
<dbReference type="RefSeq" id="YP_204275.1">
    <property type="nucleotide sequence ID" value="NC_006840.2"/>
</dbReference>
<dbReference type="SMR" id="Q5E6F9"/>
<dbReference type="STRING" id="312309.VF_0892"/>
<dbReference type="EnsemblBacteria" id="AAW85387">
    <property type="protein sequence ID" value="AAW85387"/>
    <property type="gene ID" value="VF_0892"/>
</dbReference>
<dbReference type="GeneID" id="54163560"/>
<dbReference type="KEGG" id="vfi:VF_0892"/>
<dbReference type="PATRIC" id="fig|312309.11.peg.888"/>
<dbReference type="eggNOG" id="COG0076">
    <property type="taxonomic scope" value="Bacteria"/>
</dbReference>
<dbReference type="HOGENOM" id="CLU_011856_0_4_6"/>
<dbReference type="OrthoDB" id="9803665at2"/>
<dbReference type="UniPathway" id="UPA00028">
    <property type="reaction ID" value="UER00002"/>
</dbReference>
<dbReference type="Proteomes" id="UP000000537">
    <property type="component" value="Chromosome I"/>
</dbReference>
<dbReference type="GO" id="GO:0005737">
    <property type="term" value="C:cytoplasm"/>
    <property type="evidence" value="ECO:0007669"/>
    <property type="project" value="TreeGrafter"/>
</dbReference>
<dbReference type="GO" id="GO:0004068">
    <property type="term" value="F:aspartate 1-decarboxylase activity"/>
    <property type="evidence" value="ECO:0000314"/>
    <property type="project" value="UniProtKB"/>
</dbReference>
<dbReference type="GO" id="GO:0030170">
    <property type="term" value="F:pyridoxal phosphate binding"/>
    <property type="evidence" value="ECO:0007669"/>
    <property type="project" value="InterPro"/>
</dbReference>
<dbReference type="GO" id="GO:0015940">
    <property type="term" value="P:pantothenate biosynthetic process"/>
    <property type="evidence" value="ECO:0007669"/>
    <property type="project" value="UniProtKB-UniPathway"/>
</dbReference>
<dbReference type="FunFam" id="3.40.640.10:FF:000141">
    <property type="entry name" value="Glutamate decarboxylase"/>
    <property type="match status" value="1"/>
</dbReference>
<dbReference type="FunFam" id="3.90.1150.10:FF:000135">
    <property type="entry name" value="Glutamate decarboxylase"/>
    <property type="match status" value="1"/>
</dbReference>
<dbReference type="Gene3D" id="3.90.1150.10">
    <property type="entry name" value="Aspartate Aminotransferase, domain 1"/>
    <property type="match status" value="1"/>
</dbReference>
<dbReference type="Gene3D" id="3.40.640.10">
    <property type="entry name" value="Type I PLP-dependent aspartate aminotransferase-like (Major domain)"/>
    <property type="match status" value="1"/>
</dbReference>
<dbReference type="InterPro" id="IPR022517">
    <property type="entry name" value="Asp_decarboxylase_pyridox"/>
</dbReference>
<dbReference type="InterPro" id="IPR002129">
    <property type="entry name" value="PyrdxlP-dep_de-COase"/>
</dbReference>
<dbReference type="InterPro" id="IPR015424">
    <property type="entry name" value="PyrdxlP-dep_Trfase"/>
</dbReference>
<dbReference type="InterPro" id="IPR015421">
    <property type="entry name" value="PyrdxlP-dep_Trfase_major"/>
</dbReference>
<dbReference type="InterPro" id="IPR015422">
    <property type="entry name" value="PyrdxlP-dep_Trfase_small"/>
</dbReference>
<dbReference type="NCBIfam" id="TIGR03799">
    <property type="entry name" value="NOD_PanD_pyr"/>
    <property type="match status" value="1"/>
</dbReference>
<dbReference type="PANTHER" id="PTHR45677:SF8">
    <property type="entry name" value="CYSTEINE SULFINIC ACID DECARBOXYLASE"/>
    <property type="match status" value="1"/>
</dbReference>
<dbReference type="PANTHER" id="PTHR45677">
    <property type="entry name" value="GLUTAMATE DECARBOXYLASE-RELATED"/>
    <property type="match status" value="1"/>
</dbReference>
<dbReference type="Pfam" id="PF00282">
    <property type="entry name" value="Pyridoxal_deC"/>
    <property type="match status" value="1"/>
</dbReference>
<dbReference type="SUPFAM" id="SSF53383">
    <property type="entry name" value="PLP-dependent transferases"/>
    <property type="match status" value="1"/>
</dbReference>
<organism>
    <name type="scientific">Aliivibrio fischeri (strain ATCC 700601 / ES114)</name>
    <name type="common">Vibrio fischeri</name>
    <dbReference type="NCBI Taxonomy" id="312309"/>
    <lineage>
        <taxon>Bacteria</taxon>
        <taxon>Pseudomonadati</taxon>
        <taxon>Pseudomonadota</taxon>
        <taxon>Gammaproteobacteria</taxon>
        <taxon>Vibrionales</taxon>
        <taxon>Vibrionaceae</taxon>
        <taxon>Aliivibrio</taxon>
    </lineage>
</organism>
<protein>
    <recommendedName>
        <fullName evidence="3">Aspartate 1-decarboxylase</fullName>
        <ecNumber evidence="2">4.1.1.11</ecNumber>
    </recommendedName>
</protein>
<sequence length="547" mass="60953">MVTDNKTADASFESLLRIFTVPEAPDSTLGIIEKELSQNLNQFLREHIVAEEKPLTEIEKDFTDSSMPESPTYVSEHTEHLLDTLVSQSVHTSAPSFIGHMTSALPYFLMPLSKIMIALNQNLVKIETSKAFTPLERQVLGMLHRLIFGQKDSFYQHWMHSADHSLGAFCSGGTIANITALWVARNRLLKPEGDFEGIAKQGLFAALMHYKCNGLAIFVSERGHYSLKKAADVLGIGQDGVIAVKTDNNNRVCLDDLELKIAQAKAKNIKPLAIVGVAGTTETGSIDPLRELANVAQREGCHFHVDAAWGGATLMSNTYRHLLDGIDLADSVTIDAHKQLYVPMGAGMVIFKDPELMSSIQHHAEYILRKGSKDLGRHTLEGSRSGMAMLLYSCFNVISRPGYELLINQSIEKAHYFADLIQQQDDFELITEPELCLLTYRYVPSNVKAALAIATDEQKIEIYEHLDNLTKYIQKTQRETGKSFVSRTRLTPEAYQHQPTIVFRVVLANPLTTKEILQNVLIEQREIASSSEISLPLLNQIVGNILH</sequence>
<proteinExistence type="evidence at protein level"/>
<keyword id="KW-0210">Decarboxylase</keyword>
<keyword id="KW-0456">Lyase</keyword>
<keyword id="KW-0566">Pantothenate biosynthesis</keyword>
<keyword id="KW-0663">Pyridoxal phosphate</keyword>
<keyword id="KW-1185">Reference proteome</keyword>
<name>PANP_ALIF1</name>
<accession>Q5E6F9</accession>
<comment type="function">
    <text evidence="2">Catalyzes the pyridoxal-dependent decarboxylation of aspartate to produce beta-alanine. Has weak activity with glutamate.</text>
</comment>
<comment type="catalytic activity">
    <reaction evidence="2">
        <text>L-aspartate + H(+) = beta-alanine + CO2</text>
        <dbReference type="Rhea" id="RHEA:19497"/>
        <dbReference type="ChEBI" id="CHEBI:15378"/>
        <dbReference type="ChEBI" id="CHEBI:16526"/>
        <dbReference type="ChEBI" id="CHEBI:29991"/>
        <dbReference type="ChEBI" id="CHEBI:57966"/>
        <dbReference type="EC" id="4.1.1.11"/>
    </reaction>
</comment>
<comment type="cofactor">
    <cofactor evidence="2">
        <name>pyridoxal 5'-phosphate</name>
        <dbReference type="ChEBI" id="CHEBI:597326"/>
    </cofactor>
</comment>
<comment type="biophysicochemical properties">
    <kinetics>
        <KM evidence="2">1.44 mM for aspartate (at 28 degrees Celsius)</KM>
        <KM evidence="2">1.7 mM for aspartate (at 37 degrees Celsius)</KM>
        <text evidence="2">kcat is 0.075 sec(-1) at 28 degrees Celsius. kcat is 0.008 sec(-1) at 37 degrees Celsius.</text>
    </kinetics>
</comment>
<comment type="pathway">
    <text evidence="4">Cofactor biosynthesis; (R)-pantothenate biosynthesis; beta-alanine from L-aspartate: step 1/1.</text>
</comment>
<comment type="disruption phenotype">
    <text evidence="2">Deletion mutant cannot grow in minimal medium.</text>
</comment>
<comment type="similarity">
    <text evidence="4">Belongs to the group II decarboxylase family.</text>
</comment>
<reference key="1">
    <citation type="journal article" date="2005" name="Proc. Natl. Acad. Sci. U.S.A.">
        <title>Complete genome sequence of Vibrio fischeri: a symbiotic bacterium with pathogenic congeners.</title>
        <authorList>
            <person name="Ruby E.G."/>
            <person name="Urbanowski M."/>
            <person name="Campbell J."/>
            <person name="Dunn A."/>
            <person name="Faini M."/>
            <person name="Gunsalus R."/>
            <person name="Lostroh P."/>
            <person name="Lupp C."/>
            <person name="McCann J."/>
            <person name="Millikan D."/>
            <person name="Schaefer A."/>
            <person name="Stabb E."/>
            <person name="Stevens A."/>
            <person name="Visick K."/>
            <person name="Whistler C."/>
            <person name="Greenberg E.P."/>
        </authorList>
    </citation>
    <scope>NUCLEOTIDE SEQUENCE [LARGE SCALE GENOMIC DNA]</scope>
    <source>
        <strain>ATCC 700601 / ES114</strain>
    </source>
</reference>
<reference key="2">
    <citation type="journal article" date="2017" name="J. Biol. Chem.">
        <title>Model-enabled gene search (MEGS) allows fast and direct discovery of enzymatic and transport gene functions in the marine bacterium Vibrio fischeri.</title>
        <authorList>
            <person name="Pan S."/>
            <person name="Nikolakakis K."/>
            <person name="Adamczyk P.A."/>
            <person name="Pan M."/>
            <person name="Ruby E.G."/>
            <person name="Reed J.L."/>
        </authorList>
    </citation>
    <scope>FUNCTION</scope>
    <scope>CATALYTIC ACTIVITY</scope>
    <scope>COFACTOR</scope>
    <scope>BIOPHYSICOCHEMICAL PROPERTIES</scope>
    <scope>DISRUPTION PHENOTYPE</scope>
    <source>
        <strain>ATCC 700601 / ES114</strain>
    </source>
</reference>
<feature type="chain" id="PRO_0000440874" description="Aspartate 1-decarboxylase">
    <location>
        <begin position="1"/>
        <end position="547"/>
    </location>
</feature>
<feature type="modified residue" description="N6-(pyridoxal phosphate)lysine" evidence="1">
    <location>
        <position position="338"/>
    </location>
</feature>